<name>SURE_HISS1</name>
<protein>
    <recommendedName>
        <fullName evidence="1">5'-nucleotidase SurE</fullName>
        <ecNumber evidence="1">3.1.3.5</ecNumber>
    </recommendedName>
    <alternativeName>
        <fullName evidence="1">Nucleoside 5'-monophosphate phosphohydrolase</fullName>
    </alternativeName>
</protein>
<proteinExistence type="inferred from homology"/>
<dbReference type="EC" id="3.1.3.5" evidence="1"/>
<dbReference type="EMBL" id="CP000436">
    <property type="protein sequence ID" value="ABI25773.1"/>
    <property type="molecule type" value="Genomic_DNA"/>
</dbReference>
<dbReference type="SMR" id="Q0I5H7"/>
<dbReference type="KEGG" id="hso:HS_1500"/>
<dbReference type="eggNOG" id="COG0496">
    <property type="taxonomic scope" value="Bacteria"/>
</dbReference>
<dbReference type="HOGENOM" id="CLU_045192_1_2_6"/>
<dbReference type="GO" id="GO:0005737">
    <property type="term" value="C:cytoplasm"/>
    <property type="evidence" value="ECO:0007669"/>
    <property type="project" value="UniProtKB-SubCell"/>
</dbReference>
<dbReference type="GO" id="GO:0008254">
    <property type="term" value="F:3'-nucleotidase activity"/>
    <property type="evidence" value="ECO:0007669"/>
    <property type="project" value="TreeGrafter"/>
</dbReference>
<dbReference type="GO" id="GO:0008253">
    <property type="term" value="F:5'-nucleotidase activity"/>
    <property type="evidence" value="ECO:0007669"/>
    <property type="project" value="UniProtKB-UniRule"/>
</dbReference>
<dbReference type="GO" id="GO:0004309">
    <property type="term" value="F:exopolyphosphatase activity"/>
    <property type="evidence" value="ECO:0007669"/>
    <property type="project" value="TreeGrafter"/>
</dbReference>
<dbReference type="GO" id="GO:0046872">
    <property type="term" value="F:metal ion binding"/>
    <property type="evidence" value="ECO:0007669"/>
    <property type="project" value="UniProtKB-UniRule"/>
</dbReference>
<dbReference type="GO" id="GO:0000166">
    <property type="term" value="F:nucleotide binding"/>
    <property type="evidence" value="ECO:0007669"/>
    <property type="project" value="UniProtKB-KW"/>
</dbReference>
<dbReference type="FunFam" id="3.40.1210.10:FF:000001">
    <property type="entry name" value="5'/3'-nucleotidase SurE"/>
    <property type="match status" value="1"/>
</dbReference>
<dbReference type="Gene3D" id="3.40.1210.10">
    <property type="entry name" value="Survival protein SurE-like phosphatase/nucleotidase"/>
    <property type="match status" value="1"/>
</dbReference>
<dbReference type="HAMAP" id="MF_00060">
    <property type="entry name" value="SurE"/>
    <property type="match status" value="1"/>
</dbReference>
<dbReference type="InterPro" id="IPR030048">
    <property type="entry name" value="SurE"/>
</dbReference>
<dbReference type="InterPro" id="IPR002828">
    <property type="entry name" value="SurE-like_Pase/nucleotidase"/>
</dbReference>
<dbReference type="InterPro" id="IPR036523">
    <property type="entry name" value="SurE-like_sf"/>
</dbReference>
<dbReference type="NCBIfam" id="NF001489">
    <property type="entry name" value="PRK00346.1-3"/>
    <property type="match status" value="1"/>
</dbReference>
<dbReference type="NCBIfam" id="NF001490">
    <property type="entry name" value="PRK00346.1-4"/>
    <property type="match status" value="1"/>
</dbReference>
<dbReference type="NCBIfam" id="TIGR00087">
    <property type="entry name" value="surE"/>
    <property type="match status" value="1"/>
</dbReference>
<dbReference type="PANTHER" id="PTHR30457">
    <property type="entry name" value="5'-NUCLEOTIDASE SURE"/>
    <property type="match status" value="1"/>
</dbReference>
<dbReference type="PANTHER" id="PTHR30457:SF12">
    <property type="entry name" value="5'_3'-NUCLEOTIDASE SURE"/>
    <property type="match status" value="1"/>
</dbReference>
<dbReference type="Pfam" id="PF01975">
    <property type="entry name" value="SurE"/>
    <property type="match status" value="1"/>
</dbReference>
<dbReference type="SUPFAM" id="SSF64167">
    <property type="entry name" value="SurE-like"/>
    <property type="match status" value="1"/>
</dbReference>
<organism>
    <name type="scientific">Histophilus somni (strain 129Pt)</name>
    <name type="common">Haemophilus somnus</name>
    <dbReference type="NCBI Taxonomy" id="205914"/>
    <lineage>
        <taxon>Bacteria</taxon>
        <taxon>Pseudomonadati</taxon>
        <taxon>Pseudomonadota</taxon>
        <taxon>Gammaproteobacteria</taxon>
        <taxon>Pasteurellales</taxon>
        <taxon>Pasteurellaceae</taxon>
        <taxon>Histophilus</taxon>
    </lineage>
</organism>
<keyword id="KW-0963">Cytoplasm</keyword>
<keyword id="KW-0378">Hydrolase</keyword>
<keyword id="KW-0479">Metal-binding</keyword>
<keyword id="KW-0547">Nucleotide-binding</keyword>
<sequence length="246" mass="26644">MHILLSNDDGIQAEGIKTLAKELRKFAQVTVVAPDRNRSAASSSLTLVEPLRPMKLDNGDYSINGTPADCVHLALNGFLSGQIDLVVSGINAGVNLGDDVIYSGTVAAALEGRHLSLPAIAVSLDGRQHYESAAIIVSQLIPKLYGRLLKSREIININVPDLPYSEIKGIKVCHLGYRAAAADIIKQKDPRGEEIYWIGPIGLAENESEGTDFHAVKNGYVSITPIQTDMTAYHSMTALQQWLDKE</sequence>
<reference key="1">
    <citation type="journal article" date="2007" name="J. Bacteriol.">
        <title>Complete genome sequence of Haemophilus somnus (Histophilus somni) strain 129Pt and comparison to Haemophilus ducreyi 35000HP and Haemophilus influenzae Rd.</title>
        <authorList>
            <person name="Challacombe J.F."/>
            <person name="Duncan A.J."/>
            <person name="Brettin T.S."/>
            <person name="Bruce D."/>
            <person name="Chertkov O."/>
            <person name="Detter J.C."/>
            <person name="Han C.S."/>
            <person name="Misra M."/>
            <person name="Richardson P."/>
            <person name="Tapia R."/>
            <person name="Thayer N."/>
            <person name="Xie G."/>
            <person name="Inzana T.J."/>
        </authorList>
    </citation>
    <scope>NUCLEOTIDE SEQUENCE [LARGE SCALE GENOMIC DNA]</scope>
    <source>
        <strain>129Pt</strain>
    </source>
</reference>
<gene>
    <name evidence="1" type="primary">surE</name>
    <name type="ordered locus">HS_1500</name>
</gene>
<feature type="chain" id="PRO_1000007735" description="5'-nucleotidase SurE">
    <location>
        <begin position="1"/>
        <end position="246"/>
    </location>
</feature>
<feature type="binding site" evidence="1">
    <location>
        <position position="8"/>
    </location>
    <ligand>
        <name>a divalent metal cation</name>
        <dbReference type="ChEBI" id="CHEBI:60240"/>
    </ligand>
</feature>
<feature type="binding site" evidence="1">
    <location>
        <position position="9"/>
    </location>
    <ligand>
        <name>a divalent metal cation</name>
        <dbReference type="ChEBI" id="CHEBI:60240"/>
    </ligand>
</feature>
<feature type="binding site" evidence="1">
    <location>
        <position position="39"/>
    </location>
    <ligand>
        <name>a divalent metal cation</name>
        <dbReference type="ChEBI" id="CHEBI:60240"/>
    </ligand>
</feature>
<feature type="binding site" evidence="1">
    <location>
        <position position="91"/>
    </location>
    <ligand>
        <name>a divalent metal cation</name>
        <dbReference type="ChEBI" id="CHEBI:60240"/>
    </ligand>
</feature>
<accession>Q0I5H7</accession>
<comment type="function">
    <text evidence="1">Nucleotidase that shows phosphatase activity on nucleoside 5'-monophosphates.</text>
</comment>
<comment type="catalytic activity">
    <reaction evidence="1">
        <text>a ribonucleoside 5'-phosphate + H2O = a ribonucleoside + phosphate</text>
        <dbReference type="Rhea" id="RHEA:12484"/>
        <dbReference type="ChEBI" id="CHEBI:15377"/>
        <dbReference type="ChEBI" id="CHEBI:18254"/>
        <dbReference type="ChEBI" id="CHEBI:43474"/>
        <dbReference type="ChEBI" id="CHEBI:58043"/>
        <dbReference type="EC" id="3.1.3.5"/>
    </reaction>
</comment>
<comment type="cofactor">
    <cofactor evidence="1">
        <name>a divalent metal cation</name>
        <dbReference type="ChEBI" id="CHEBI:60240"/>
    </cofactor>
    <text evidence="1">Binds 1 divalent metal cation per subunit.</text>
</comment>
<comment type="subcellular location">
    <subcellularLocation>
        <location evidence="1">Cytoplasm</location>
    </subcellularLocation>
</comment>
<comment type="similarity">
    <text evidence="1">Belongs to the SurE nucleotidase family.</text>
</comment>
<evidence type="ECO:0000255" key="1">
    <source>
        <dbReference type="HAMAP-Rule" id="MF_00060"/>
    </source>
</evidence>